<reference key="1">
    <citation type="journal article" date="2012" name="J. Bacteriol.">
        <title>Complete genome sequence of the metabolically versatile halophilic archaeon Haloferax mediterranei, a poly(3-hydroxybutyrate-co-3-hydroxyvalerate) producer.</title>
        <authorList>
            <person name="Han J."/>
            <person name="Zhang F."/>
            <person name="Hou J."/>
            <person name="Liu X."/>
            <person name="Li M."/>
            <person name="Liu H."/>
            <person name="Cai L."/>
            <person name="Zhang B."/>
            <person name="Chen Y."/>
            <person name="Zhou J."/>
            <person name="Hu S."/>
            <person name="Xiang H."/>
        </authorList>
    </citation>
    <scope>NUCLEOTIDE SEQUENCE [LARGE SCALE GENOMIC DNA]</scope>
    <source>
        <strain>ATCC 33500 / DSM 1411 / JCM 8866 / NBRC 14739 / NCIMB 2177 / R-4</strain>
    </source>
</reference>
<reference key="2">
    <citation type="journal article" date="1994" name="Eur. J. Biochem.">
        <title>Comparative analysis of the protein components from 5S rRNA.protein complexes of halophilic archaebacteria.</title>
        <authorList>
            <person name="McDougall J."/>
            <person name="Wittmann-Liebold B."/>
        </authorList>
    </citation>
    <scope>PROTEIN SEQUENCE OF 2-23</scope>
    <source>
        <strain>ATCC 33500 / DSM 1411 / JCM 8866 / NBRC 14739 / NCIMB 2177 / R-4</strain>
    </source>
</reference>
<feature type="initiator methionine" description="Removed" evidence="2">
    <location>
        <position position="1"/>
    </location>
</feature>
<feature type="chain" id="PRO_0000131401" description="Large ribosomal subunit protein uL18">
    <location>
        <begin position="2"/>
        <end position="184"/>
    </location>
</feature>
<protein>
    <recommendedName>
        <fullName evidence="1">Large ribosomal subunit protein uL18</fullName>
    </recommendedName>
    <alternativeName>
        <fullName evidence="3">50S ribosomal protein L18</fullName>
    </alternativeName>
    <alternativeName>
        <fullName>HmeL18</fullName>
    </alternativeName>
</protein>
<organism>
    <name type="scientific">Haloferax mediterranei (strain ATCC 33500 / DSM 1411 / JCM 8866 / NBRC 14739 / NCIMB 2177 / R-4)</name>
    <name type="common">Halobacterium mediterranei</name>
    <dbReference type="NCBI Taxonomy" id="523841"/>
    <lineage>
        <taxon>Archaea</taxon>
        <taxon>Methanobacteriati</taxon>
        <taxon>Methanobacteriota</taxon>
        <taxon>Stenosarchaea group</taxon>
        <taxon>Halobacteria</taxon>
        <taxon>Halobacteriales</taxon>
        <taxon>Haloferacaceae</taxon>
        <taxon>Haloferax</taxon>
    </lineage>
</organism>
<name>RL18_HALMT</name>
<sequence>MATGPRYKVPMRRRREVRTDYHQRLRLLKSGKPRLVARVSNKHVRAQLVTPGPQGDETHAAATSADLDEYGWEAPTGNLPSAYLTGYLAGIRALAAGVEEAVLDIGLNTATPGNKVFAVQEGAIDAGLEIPHNDAVLADWDRNRGVHIAEYAEQLDEPLYSGDFDATNLPEHFDEVLGNLQEDE</sequence>
<gene>
    <name evidence="1" type="primary">rpl18</name>
    <name type="synonym">rplR</name>
    <name type="ordered locus">HFX_2569</name>
</gene>
<accession>P50561</accession>
<accession>I3R7P0</accession>
<comment type="function">
    <text evidence="1">This is one of the proteins that bind and probably mediate the attachment of the 5S RNA into the large ribosomal subunit, where it forms part of the central protuberance.</text>
</comment>
<comment type="subunit">
    <text evidence="1">Part of the 50S ribosomal subunit. Contacts the 5S and 23S rRNAs.</text>
</comment>
<comment type="similarity">
    <text evidence="1">Belongs to the universal ribosomal protein uL18 family.</text>
</comment>
<evidence type="ECO:0000255" key="1">
    <source>
        <dbReference type="HAMAP-Rule" id="MF_01337"/>
    </source>
</evidence>
<evidence type="ECO:0000269" key="2">
    <source>
    </source>
</evidence>
<evidence type="ECO:0000305" key="3"/>
<keyword id="KW-0903">Direct protein sequencing</keyword>
<keyword id="KW-0687">Ribonucleoprotein</keyword>
<keyword id="KW-0689">Ribosomal protein</keyword>
<keyword id="KW-0694">RNA-binding</keyword>
<keyword id="KW-0699">rRNA-binding</keyword>
<dbReference type="EMBL" id="CP001868">
    <property type="protein sequence ID" value="AFK20250.1"/>
    <property type="molecule type" value="Genomic_DNA"/>
</dbReference>
<dbReference type="PIR" id="F33084">
    <property type="entry name" value="F33084"/>
</dbReference>
<dbReference type="RefSeq" id="WP_004060017.1">
    <property type="nucleotide sequence ID" value="NC_017941.2"/>
</dbReference>
<dbReference type="SMR" id="P50561"/>
<dbReference type="STRING" id="523841.HFX_2569"/>
<dbReference type="PaxDb" id="523841-HFX_2569"/>
<dbReference type="GeneID" id="40157538"/>
<dbReference type="KEGG" id="hme:HFX_2569"/>
<dbReference type="eggNOG" id="arCOG04088">
    <property type="taxonomic scope" value="Archaea"/>
</dbReference>
<dbReference type="HOGENOM" id="CLU_056222_2_0_2"/>
<dbReference type="OrthoDB" id="8644at2157"/>
<dbReference type="Proteomes" id="UP000006469">
    <property type="component" value="Chromosome"/>
</dbReference>
<dbReference type="GO" id="GO:0022625">
    <property type="term" value="C:cytosolic large ribosomal subunit"/>
    <property type="evidence" value="ECO:0007669"/>
    <property type="project" value="TreeGrafter"/>
</dbReference>
<dbReference type="GO" id="GO:0008097">
    <property type="term" value="F:5S rRNA binding"/>
    <property type="evidence" value="ECO:0007669"/>
    <property type="project" value="InterPro"/>
</dbReference>
<dbReference type="GO" id="GO:0003735">
    <property type="term" value="F:structural constituent of ribosome"/>
    <property type="evidence" value="ECO:0007669"/>
    <property type="project" value="InterPro"/>
</dbReference>
<dbReference type="GO" id="GO:0000027">
    <property type="term" value="P:ribosomal large subunit assembly"/>
    <property type="evidence" value="ECO:0007669"/>
    <property type="project" value="TreeGrafter"/>
</dbReference>
<dbReference type="GO" id="GO:0006412">
    <property type="term" value="P:translation"/>
    <property type="evidence" value="ECO:0007669"/>
    <property type="project" value="UniProtKB-UniRule"/>
</dbReference>
<dbReference type="CDD" id="cd00432">
    <property type="entry name" value="Ribosomal_L18_L5e"/>
    <property type="match status" value="1"/>
</dbReference>
<dbReference type="FunFam" id="3.30.420.100:FF:000008">
    <property type="entry name" value="50S ribosomal protein L18"/>
    <property type="match status" value="1"/>
</dbReference>
<dbReference type="Gene3D" id="3.30.420.100">
    <property type="match status" value="1"/>
</dbReference>
<dbReference type="HAMAP" id="MF_01337_A">
    <property type="entry name" value="Ribosomal_uL18_A"/>
    <property type="match status" value="1"/>
</dbReference>
<dbReference type="InterPro" id="IPR005485">
    <property type="entry name" value="Rbsml_uL18_euk"/>
</dbReference>
<dbReference type="NCBIfam" id="NF006342">
    <property type="entry name" value="PRK08569.1"/>
    <property type="match status" value="1"/>
</dbReference>
<dbReference type="PANTHER" id="PTHR23410:SF12">
    <property type="entry name" value="LARGE RIBOSOMAL SUBUNIT PROTEIN UL18"/>
    <property type="match status" value="1"/>
</dbReference>
<dbReference type="PANTHER" id="PTHR23410">
    <property type="entry name" value="RIBOSOMAL PROTEIN L5-RELATED"/>
    <property type="match status" value="1"/>
</dbReference>
<dbReference type="Pfam" id="PF17144">
    <property type="entry name" value="Ribosomal_L5e"/>
    <property type="match status" value="2"/>
</dbReference>
<dbReference type="PRINTS" id="PR00058">
    <property type="entry name" value="RIBOSOMALL5"/>
</dbReference>
<dbReference type="SUPFAM" id="SSF53137">
    <property type="entry name" value="Translational machinery components"/>
    <property type="match status" value="1"/>
</dbReference>
<proteinExistence type="evidence at protein level"/>